<gene>
    <name type="primary">fliN</name>
    <name type="synonym">flaN</name>
    <name type="synonym">motD</name>
    <name type="ordered locus">STM1977</name>
</gene>
<name>FLIN_SALTY</name>
<reference key="1">
    <citation type="journal article" date="1989" name="J. Bacteriol.">
        <title>Flagellar switch of Salmonella typhimurium: gene sequences and deduced protein sequences.</title>
        <authorList>
            <person name="Kihara M."/>
            <person name="Homma M."/>
            <person name="Kutsukake K."/>
            <person name="Macnab R.M."/>
        </authorList>
    </citation>
    <scope>NUCLEOTIDE SEQUENCE [GENOMIC DNA]</scope>
</reference>
<reference key="2">
    <citation type="journal article" date="2001" name="Nature">
        <title>Complete genome sequence of Salmonella enterica serovar Typhimurium LT2.</title>
        <authorList>
            <person name="McClelland M."/>
            <person name="Sanderson K.E."/>
            <person name="Spieth J."/>
            <person name="Clifton S.W."/>
            <person name="Latreille P."/>
            <person name="Courtney L."/>
            <person name="Porwollik S."/>
            <person name="Ali J."/>
            <person name="Dante M."/>
            <person name="Du F."/>
            <person name="Hou S."/>
            <person name="Layman D."/>
            <person name="Leonard S."/>
            <person name="Nguyen C."/>
            <person name="Scott K."/>
            <person name="Holmes A."/>
            <person name="Grewal N."/>
            <person name="Mulvaney E."/>
            <person name="Ryan E."/>
            <person name="Sun H."/>
            <person name="Florea L."/>
            <person name="Miller W."/>
            <person name="Stoneking T."/>
            <person name="Nhan M."/>
            <person name="Waterston R."/>
            <person name="Wilson R.K."/>
        </authorList>
    </citation>
    <scope>NUCLEOTIDE SEQUENCE [LARGE SCALE GENOMIC DNA]</scope>
    <source>
        <strain>LT2 / SGSC1412 / ATCC 700720</strain>
    </source>
</reference>
<reference key="3">
    <citation type="journal article" date="1997" name="J. Bacteriol.">
        <title>The FliO, FliP, FliQ, and FliR proteins of Salmonella typhimurium: putative components for flagellar assembly.</title>
        <authorList>
            <person name="Ohnishi K."/>
            <person name="Fan F."/>
            <person name="Schoenhals G.J."/>
            <person name="Kihara M."/>
            <person name="Macnab R.M."/>
        </authorList>
    </citation>
    <scope>NUCLEOTIDE SEQUENCE [GENOMIC DNA] OF 106-137</scope>
    <source>
        <strain>LT2</strain>
    </source>
</reference>
<protein>
    <recommendedName>
        <fullName>Flagellar motor switch protein FliN</fullName>
    </recommendedName>
</protein>
<feature type="chain" id="PRO_0000184119" description="Flagellar motor switch protein FliN">
    <location>
        <begin position="1"/>
        <end position="137"/>
    </location>
</feature>
<feature type="helix" evidence="3">
    <location>
        <begin position="56"/>
        <end position="59"/>
    </location>
</feature>
<feature type="strand" evidence="4">
    <location>
        <begin position="61"/>
        <end position="73"/>
    </location>
</feature>
<feature type="helix" evidence="4">
    <location>
        <begin position="75"/>
        <end position="79"/>
    </location>
</feature>
<feature type="strand" evidence="4">
    <location>
        <begin position="86"/>
        <end position="92"/>
    </location>
</feature>
<feature type="strand" evidence="4">
    <location>
        <begin position="97"/>
        <end position="101"/>
    </location>
</feature>
<feature type="strand" evidence="4">
    <location>
        <begin position="104"/>
        <end position="114"/>
    </location>
</feature>
<feature type="strand" evidence="4">
    <location>
        <begin position="117"/>
        <end position="125"/>
    </location>
</feature>
<feature type="helix" evidence="4">
    <location>
        <begin position="128"/>
        <end position="136"/>
    </location>
</feature>
<proteinExistence type="evidence at protein level"/>
<organism>
    <name type="scientific">Salmonella typhimurium (strain LT2 / SGSC1412 / ATCC 700720)</name>
    <dbReference type="NCBI Taxonomy" id="99287"/>
    <lineage>
        <taxon>Bacteria</taxon>
        <taxon>Pseudomonadati</taxon>
        <taxon>Pseudomonadota</taxon>
        <taxon>Gammaproteobacteria</taxon>
        <taxon>Enterobacterales</taxon>
        <taxon>Enterobacteriaceae</taxon>
        <taxon>Salmonella</taxon>
    </lineage>
</organism>
<dbReference type="EMBL" id="M24463">
    <property type="protein sequence ID" value="AAA27105.1"/>
    <property type="molecule type" value="Genomic_DNA"/>
</dbReference>
<dbReference type="EMBL" id="AE006468">
    <property type="protein sequence ID" value="AAL20889.1"/>
    <property type="molecule type" value="Genomic_DNA"/>
</dbReference>
<dbReference type="EMBL" id="L49021">
    <property type="protein sequence ID" value="AAB81317.1"/>
    <property type="molecule type" value="Genomic_DNA"/>
</dbReference>
<dbReference type="PIR" id="D44513">
    <property type="entry name" value="D30929"/>
</dbReference>
<dbReference type="RefSeq" id="NP_460930.1">
    <property type="nucleotide sequence ID" value="NC_003197.2"/>
</dbReference>
<dbReference type="RefSeq" id="WP_001282115.1">
    <property type="nucleotide sequence ID" value="NC_003197.2"/>
</dbReference>
<dbReference type="PDB" id="4YXB">
    <property type="method" value="X-ray"/>
    <property type="resolution" value="2.56 A"/>
    <property type="chains" value="A/B=5-137, C=38-43, D=67-137"/>
</dbReference>
<dbReference type="PDB" id="4YXC">
    <property type="method" value="X-ray"/>
    <property type="resolution" value="2.30 A"/>
    <property type="chains" value="B=5-137"/>
</dbReference>
<dbReference type="PDB" id="8UMD">
    <property type="method" value="EM"/>
    <property type="resolution" value="3.60 A"/>
    <property type="chains" value="D/E/F=1-137"/>
</dbReference>
<dbReference type="PDB" id="8UMX">
    <property type="method" value="EM"/>
    <property type="resolution" value="4.00 A"/>
    <property type="chains" value="D/E/F=1-137"/>
</dbReference>
<dbReference type="PDB" id="8UOX">
    <property type="method" value="EM"/>
    <property type="resolution" value="4.60 A"/>
    <property type="chains" value="D1/D2/D3/D4/D5/D6/D7/D8/D9/DA/DB/DC/DD/DE/DF/DG/DH/DI/DJ/DK/DL/DM/DN/DO/DP/DQ/DR/DS/DT/DU=1-137"/>
</dbReference>
<dbReference type="PDB" id="8UPL">
    <property type="method" value="EM"/>
    <property type="resolution" value="5.40 A"/>
    <property type="chains" value="D1/D2/D3/D4/D5/D6/D7/D8/D9/DA/DB/DC/DD/DE/DF/DG/DH/DI/DJ/DK/DL/DM/DN/DO/DP/DQ/DR/DS/DT/DU=1-137"/>
</dbReference>
<dbReference type="PDB" id="8VIB">
    <property type="method" value="EM"/>
    <property type="resolution" value="4.60 A"/>
    <property type="chains" value="N/P/Q=1-137"/>
</dbReference>
<dbReference type="PDB" id="8VID">
    <property type="method" value="EM"/>
    <property type="resolution" value="5.90 A"/>
    <property type="chains" value="N/P/Q=1-137"/>
</dbReference>
<dbReference type="PDB" id="8VKQ">
    <property type="method" value="EM"/>
    <property type="resolution" value="4.60 A"/>
    <property type="chains" value="AB/AC/AE/AF/BB/BE/CA/CB/CD/CE/CG/D/DA/DD/DG/E/EA/EC/ED/EF/EG/FC/FF/GB/GC/GE/GF/H/HB/HE=1-137"/>
</dbReference>
<dbReference type="PDB" id="8VKR">
    <property type="method" value="EM"/>
    <property type="resolution" value="5.90 A"/>
    <property type="chains" value="AB/AC/AE/AF/BB/BE/CA/CB/CD/CE/CG/D/DA/DD/DG/E/EA/EC/ED/EF/EG/FC/FF/GB/GC/GE/GF/H/HB/HE=1-137"/>
</dbReference>
<dbReference type="PDB" id="8WIW">
    <property type="method" value="EM"/>
    <property type="resolution" value="5.60 A"/>
    <property type="chains" value="0/1/2/5/6/A1/A6/A7/A8/AA/AB/AC/AD/AE/AF/AG/AH/AI/AJ/AK/AO/AP/AQ/AU/AV/AW/Aa/Ab/Ac/Ag=1-137"/>
</dbReference>
<dbReference type="PDB" id="8WO5">
    <property type="method" value="EM"/>
    <property type="resolution" value="7.40 A"/>
    <property type="chains" value="B0/B2/B3/B4/B8/B9/BY/BZ/Bd/Be/Bf/Bj/Bk/Bl/Bp/Bq/Br/Bv/Bw/Bx/C0/C1/C2/C4/C5/C9/CD/CE/CF/CJ=1-137"/>
</dbReference>
<dbReference type="PDB" id="8WOE">
    <property type="method" value="EM"/>
    <property type="resolution" value="4.30 A"/>
    <property type="chains" value="B1/B2/B7/B8/B9/BY/BZ/Be/Bf/Bg/Bl/Bm/Bn/Bs/Bt/Bu/Bz/C1/C2/C3/C4/C5/C8/C9/CD/CE/CF/CK/CL/CM=1-137"/>
</dbReference>
<dbReference type="PDB" id="8XP0">
    <property type="method" value="EM"/>
    <property type="resolution" value="4.00 A"/>
    <property type="chains" value="P/Q/R/V/W/X/b/c/d=1-137"/>
</dbReference>
<dbReference type="PDB" id="8XP1">
    <property type="method" value="EM"/>
    <property type="resolution" value="4.40 A"/>
    <property type="chains" value="0/AA/AB/o/p/q/u/v/w=1-137"/>
</dbReference>
<dbReference type="PDB" id="8YJT">
    <property type="method" value="EM"/>
    <property type="resolution" value="5.90 A"/>
    <property type="chains" value="1/2/6/7/8/A0/A4/A5/A6/AB/AC/AD/AH/AI/AJ/AN/AO/AP/AT/AU/AV/AZ/Aa/Ab/Af/Ag/Ah/Al/Am/An=1-137"/>
</dbReference>
<dbReference type="PDB" id="9N49">
    <property type="method" value="EM"/>
    <property type="resolution" value="3.00 A"/>
    <property type="chains" value="N/P/Q=1-137"/>
</dbReference>
<dbReference type="PDBsum" id="4YXB"/>
<dbReference type="PDBsum" id="4YXC"/>
<dbReference type="PDBsum" id="8UMD"/>
<dbReference type="PDBsum" id="8UMX"/>
<dbReference type="PDBsum" id="8UOX"/>
<dbReference type="PDBsum" id="8UPL"/>
<dbReference type="PDBsum" id="8VIB"/>
<dbReference type="PDBsum" id="8VID"/>
<dbReference type="PDBsum" id="8VKQ"/>
<dbReference type="PDBsum" id="8VKR"/>
<dbReference type="PDBsum" id="8WIW"/>
<dbReference type="PDBsum" id="8WO5"/>
<dbReference type="PDBsum" id="8WOE"/>
<dbReference type="PDBsum" id="8XP0"/>
<dbReference type="PDBsum" id="8XP1"/>
<dbReference type="PDBsum" id="8YJT"/>
<dbReference type="PDBsum" id="9N49"/>
<dbReference type="EMDB" id="EMD-37570"/>
<dbReference type="EMDB" id="EMD-37679"/>
<dbReference type="EMDB" id="EMD-37684"/>
<dbReference type="EMDB" id="EMD-38546"/>
<dbReference type="EMDB" id="EMD-38547"/>
<dbReference type="EMDB" id="EMD-39349"/>
<dbReference type="EMDB" id="EMD-42387"/>
<dbReference type="EMDB" id="EMD-42439"/>
<dbReference type="EMDB" id="EMD-42451"/>
<dbReference type="EMDB" id="EMD-43256"/>
<dbReference type="EMDB" id="EMD-43258"/>
<dbReference type="EMDB" id="EMD-43327"/>
<dbReference type="EMDB" id="EMD-43328"/>
<dbReference type="EMDB" id="EMD-48871"/>
<dbReference type="SMR" id="P26419"/>
<dbReference type="IntAct" id="P26419">
    <property type="interactions" value="1"/>
</dbReference>
<dbReference type="STRING" id="99287.STM1977"/>
<dbReference type="TCDB" id="3.A.6.2.1">
    <property type="family name" value="the type iii (virulence-related) secretory pathway (iiisp) family"/>
</dbReference>
<dbReference type="PaxDb" id="99287-STM1977"/>
<dbReference type="GeneID" id="1253498"/>
<dbReference type="GeneID" id="66756494"/>
<dbReference type="KEGG" id="stm:STM1977"/>
<dbReference type="PATRIC" id="fig|99287.12.peg.2094"/>
<dbReference type="HOGENOM" id="CLU_097058_1_1_6"/>
<dbReference type="OMA" id="EDMWAEA"/>
<dbReference type="PhylomeDB" id="P26419"/>
<dbReference type="BioCyc" id="SENT99287:STM1977-MONOMER"/>
<dbReference type="EvolutionaryTrace" id="P26419"/>
<dbReference type="Proteomes" id="UP000001014">
    <property type="component" value="Chromosome"/>
</dbReference>
<dbReference type="GO" id="GO:0009425">
    <property type="term" value="C:bacterial-type flagellum basal body"/>
    <property type="evidence" value="ECO:0007669"/>
    <property type="project" value="UniProtKB-SubCell"/>
</dbReference>
<dbReference type="GO" id="GO:0005886">
    <property type="term" value="C:plasma membrane"/>
    <property type="evidence" value="ECO:0007669"/>
    <property type="project" value="UniProtKB-SubCell"/>
</dbReference>
<dbReference type="GO" id="GO:0003774">
    <property type="term" value="F:cytoskeletal motor activity"/>
    <property type="evidence" value="ECO:0007669"/>
    <property type="project" value="InterPro"/>
</dbReference>
<dbReference type="GO" id="GO:0071973">
    <property type="term" value="P:bacterial-type flagellum-dependent cell motility"/>
    <property type="evidence" value="ECO:0007669"/>
    <property type="project" value="InterPro"/>
</dbReference>
<dbReference type="GO" id="GO:0006935">
    <property type="term" value="P:chemotaxis"/>
    <property type="evidence" value="ECO:0007669"/>
    <property type="project" value="UniProtKB-KW"/>
</dbReference>
<dbReference type="Gene3D" id="2.30.330.10">
    <property type="entry name" value="SpoA-like"/>
    <property type="match status" value="1"/>
</dbReference>
<dbReference type="InterPro" id="IPR012826">
    <property type="entry name" value="FliN"/>
</dbReference>
<dbReference type="InterPro" id="IPR001543">
    <property type="entry name" value="FliN-like_C"/>
</dbReference>
<dbReference type="InterPro" id="IPR051469">
    <property type="entry name" value="FliN/MopA/SpaO"/>
</dbReference>
<dbReference type="InterPro" id="IPR031576">
    <property type="entry name" value="FliN_N"/>
</dbReference>
<dbReference type="InterPro" id="IPR001172">
    <property type="entry name" value="FliN_T3SS_HrcQb"/>
</dbReference>
<dbReference type="InterPro" id="IPR036429">
    <property type="entry name" value="SpoA-like_sf"/>
</dbReference>
<dbReference type="NCBIfam" id="TIGR02480">
    <property type="entry name" value="fliN"/>
    <property type="match status" value="1"/>
</dbReference>
<dbReference type="PANTHER" id="PTHR43484">
    <property type="match status" value="1"/>
</dbReference>
<dbReference type="PANTHER" id="PTHR43484:SF1">
    <property type="entry name" value="FLAGELLAR MOTOR SWITCH PROTEIN FLIN"/>
    <property type="match status" value="1"/>
</dbReference>
<dbReference type="Pfam" id="PF01052">
    <property type="entry name" value="FliMN_C"/>
    <property type="match status" value="1"/>
</dbReference>
<dbReference type="Pfam" id="PF16973">
    <property type="entry name" value="FliN_N"/>
    <property type="match status" value="1"/>
</dbReference>
<dbReference type="PRINTS" id="PR00956">
    <property type="entry name" value="FLGMOTORFLIN"/>
</dbReference>
<dbReference type="SUPFAM" id="SSF101801">
    <property type="entry name" value="Surface presentation of antigens (SPOA)"/>
    <property type="match status" value="1"/>
</dbReference>
<evidence type="ECO:0000250" key="1"/>
<evidence type="ECO:0000305" key="2"/>
<evidence type="ECO:0007829" key="3">
    <source>
        <dbReference type="PDB" id="4YXB"/>
    </source>
</evidence>
<evidence type="ECO:0007829" key="4">
    <source>
        <dbReference type="PDB" id="4YXC"/>
    </source>
</evidence>
<keyword id="KW-0002">3D-structure</keyword>
<keyword id="KW-0975">Bacterial flagellum</keyword>
<keyword id="KW-0997">Cell inner membrane</keyword>
<keyword id="KW-1003">Cell membrane</keyword>
<keyword id="KW-0145">Chemotaxis</keyword>
<keyword id="KW-0283">Flagellar rotation</keyword>
<keyword id="KW-0472">Membrane</keyword>
<keyword id="KW-1185">Reference proteome</keyword>
<sequence>MSDMNNPSDENTGALDDLWADALNEQKATTTKSAADAVFQQLGGGDVSGAMQDIDLIMDIPVKLTVELGRTRMTIKELLRLTQGSVVALDGLAGEPLDILINGYLIAQGEVVVVADKYGVRITDIITPSERMRRLSR</sequence>
<accession>P26419</accession>
<comment type="function">
    <text evidence="1">FliN is one of three proteins (FliG, FliN, FliM) that form the rotor-mounted switch complex (C ring), located at the base of the basal body. This complex interacts with the CheY and CheZ chemotaxis proteins, in addition to contacting components of the motor that determine the direction of flagellar rotation (By similarity).</text>
</comment>
<comment type="subcellular location">
    <subcellularLocation>
        <location>Cell inner membrane</location>
        <topology>Peripheral membrane protein</topology>
        <orientation>Cytoplasmic side</orientation>
    </subcellularLocation>
    <subcellularLocation>
        <location>Bacterial flagellum basal body</location>
    </subcellularLocation>
</comment>
<comment type="similarity">
    <text evidence="2">Belongs to the FliN/MopA/SpaO family.</text>
</comment>